<accession>Q7MY36</accession>
<protein>
    <recommendedName>
        <fullName evidence="2">Formamidopyrimidine-DNA glycosylase</fullName>
        <shortName evidence="2">Fapy-DNA glycosylase</shortName>
        <ecNumber evidence="2">3.2.2.23</ecNumber>
    </recommendedName>
    <alternativeName>
        <fullName evidence="2">DNA-(apurinic or apyrimidinic site) lyase MutM</fullName>
        <shortName evidence="2">AP lyase MutM</shortName>
        <ecNumber evidence="2">4.2.99.18</ecNumber>
    </alternativeName>
</protein>
<dbReference type="EC" id="3.2.2.23" evidence="2"/>
<dbReference type="EC" id="4.2.99.18" evidence="2"/>
<dbReference type="EMBL" id="BX571875">
    <property type="protein sequence ID" value="CAE17229.1"/>
    <property type="molecule type" value="Genomic_DNA"/>
</dbReference>
<dbReference type="RefSeq" id="WP_011148915.1">
    <property type="nucleotide sequence ID" value="NC_005126.1"/>
</dbReference>
<dbReference type="SMR" id="Q7MY36"/>
<dbReference type="STRING" id="243265.plu4857"/>
<dbReference type="GeneID" id="48851085"/>
<dbReference type="KEGG" id="plu:plu4857"/>
<dbReference type="eggNOG" id="COG0266">
    <property type="taxonomic scope" value="Bacteria"/>
</dbReference>
<dbReference type="HOGENOM" id="CLU_038423_1_1_6"/>
<dbReference type="OrthoDB" id="9800855at2"/>
<dbReference type="Proteomes" id="UP000002514">
    <property type="component" value="Chromosome"/>
</dbReference>
<dbReference type="GO" id="GO:0034039">
    <property type="term" value="F:8-oxo-7,8-dihydroguanine DNA N-glycosylase activity"/>
    <property type="evidence" value="ECO:0007669"/>
    <property type="project" value="TreeGrafter"/>
</dbReference>
<dbReference type="GO" id="GO:0140078">
    <property type="term" value="F:class I DNA-(apurinic or apyrimidinic site) endonuclease activity"/>
    <property type="evidence" value="ECO:0007669"/>
    <property type="project" value="UniProtKB-EC"/>
</dbReference>
<dbReference type="GO" id="GO:0003684">
    <property type="term" value="F:damaged DNA binding"/>
    <property type="evidence" value="ECO:0007669"/>
    <property type="project" value="InterPro"/>
</dbReference>
<dbReference type="GO" id="GO:0008270">
    <property type="term" value="F:zinc ion binding"/>
    <property type="evidence" value="ECO:0007669"/>
    <property type="project" value="UniProtKB-UniRule"/>
</dbReference>
<dbReference type="GO" id="GO:0006284">
    <property type="term" value="P:base-excision repair"/>
    <property type="evidence" value="ECO:0007669"/>
    <property type="project" value="InterPro"/>
</dbReference>
<dbReference type="CDD" id="cd08966">
    <property type="entry name" value="EcFpg-like_N"/>
    <property type="match status" value="1"/>
</dbReference>
<dbReference type="FunFam" id="1.10.8.50:FF:000003">
    <property type="entry name" value="Formamidopyrimidine-DNA glycosylase"/>
    <property type="match status" value="1"/>
</dbReference>
<dbReference type="FunFam" id="3.20.190.10:FF:000001">
    <property type="entry name" value="Formamidopyrimidine-DNA glycosylase"/>
    <property type="match status" value="1"/>
</dbReference>
<dbReference type="Gene3D" id="1.10.8.50">
    <property type="match status" value="1"/>
</dbReference>
<dbReference type="Gene3D" id="3.20.190.10">
    <property type="entry name" value="MutM-like, N-terminal"/>
    <property type="match status" value="1"/>
</dbReference>
<dbReference type="HAMAP" id="MF_00103">
    <property type="entry name" value="Fapy_DNA_glycosyl"/>
    <property type="match status" value="1"/>
</dbReference>
<dbReference type="InterPro" id="IPR015886">
    <property type="entry name" value="DNA_glyclase/AP_lyase_DNA-bd"/>
</dbReference>
<dbReference type="InterPro" id="IPR015887">
    <property type="entry name" value="DNA_glyclase_Znf_dom_DNA_BS"/>
</dbReference>
<dbReference type="InterPro" id="IPR020629">
    <property type="entry name" value="Formamido-pyr_DNA_Glyclase"/>
</dbReference>
<dbReference type="InterPro" id="IPR012319">
    <property type="entry name" value="FPG_cat"/>
</dbReference>
<dbReference type="InterPro" id="IPR035937">
    <property type="entry name" value="MutM-like_N-ter"/>
</dbReference>
<dbReference type="InterPro" id="IPR010979">
    <property type="entry name" value="Ribosomal_uS13-like_H2TH"/>
</dbReference>
<dbReference type="InterPro" id="IPR000214">
    <property type="entry name" value="Znf_DNA_glyclase/AP_lyase"/>
</dbReference>
<dbReference type="InterPro" id="IPR010663">
    <property type="entry name" value="Znf_FPG/IleRS"/>
</dbReference>
<dbReference type="NCBIfam" id="TIGR00577">
    <property type="entry name" value="fpg"/>
    <property type="match status" value="1"/>
</dbReference>
<dbReference type="NCBIfam" id="NF002211">
    <property type="entry name" value="PRK01103.1"/>
    <property type="match status" value="1"/>
</dbReference>
<dbReference type="PANTHER" id="PTHR22993">
    <property type="entry name" value="FORMAMIDOPYRIMIDINE-DNA GLYCOSYLASE"/>
    <property type="match status" value="1"/>
</dbReference>
<dbReference type="PANTHER" id="PTHR22993:SF9">
    <property type="entry name" value="FORMAMIDOPYRIMIDINE-DNA GLYCOSYLASE"/>
    <property type="match status" value="1"/>
</dbReference>
<dbReference type="Pfam" id="PF01149">
    <property type="entry name" value="Fapy_DNA_glyco"/>
    <property type="match status" value="1"/>
</dbReference>
<dbReference type="Pfam" id="PF06831">
    <property type="entry name" value="H2TH"/>
    <property type="match status" value="1"/>
</dbReference>
<dbReference type="Pfam" id="PF06827">
    <property type="entry name" value="zf-FPG_IleRS"/>
    <property type="match status" value="1"/>
</dbReference>
<dbReference type="SMART" id="SM00898">
    <property type="entry name" value="Fapy_DNA_glyco"/>
    <property type="match status" value="1"/>
</dbReference>
<dbReference type="SMART" id="SM01232">
    <property type="entry name" value="H2TH"/>
    <property type="match status" value="1"/>
</dbReference>
<dbReference type="SUPFAM" id="SSF57716">
    <property type="entry name" value="Glucocorticoid receptor-like (DNA-binding domain)"/>
    <property type="match status" value="1"/>
</dbReference>
<dbReference type="SUPFAM" id="SSF81624">
    <property type="entry name" value="N-terminal domain of MutM-like DNA repair proteins"/>
    <property type="match status" value="1"/>
</dbReference>
<dbReference type="SUPFAM" id="SSF46946">
    <property type="entry name" value="S13-like H2TH domain"/>
    <property type="match status" value="1"/>
</dbReference>
<dbReference type="PROSITE" id="PS51068">
    <property type="entry name" value="FPG_CAT"/>
    <property type="match status" value="1"/>
</dbReference>
<dbReference type="PROSITE" id="PS01242">
    <property type="entry name" value="ZF_FPG_1"/>
    <property type="match status" value="1"/>
</dbReference>
<dbReference type="PROSITE" id="PS51066">
    <property type="entry name" value="ZF_FPG_2"/>
    <property type="match status" value="1"/>
</dbReference>
<name>FPG_PHOLL</name>
<sequence>MPELPEVETSRRGIEPHLVGNVIQYAVVRNGRLRWPVAEEIMKLSDQLVLSIQRRAKYLLIELANGWIIVHLGMSGSLRILPEERPAEKHDHVDLVMADGKVLRYTDPRRFGAWLWSDDLERCSVLAHLGPEPLSDDFNGFYLYTRSSNKKTLIKPWLMDNKLVVGVGNIYANEALFTAHIQPDRPAQTLTEREAHLLAETIKKVLQRSIERGGTTLRDFLQSDGKPGYFAQELFVYGRAGEPCRICGEQIESIKLGQRSTFFCRHCQY</sequence>
<feature type="initiator methionine" description="Removed" evidence="1">
    <location>
        <position position="1"/>
    </location>
</feature>
<feature type="chain" id="PRO_0000170848" description="Formamidopyrimidine-DNA glycosylase">
    <location>
        <begin position="2"/>
        <end position="269"/>
    </location>
</feature>
<feature type="zinc finger region" description="FPG-type" evidence="2">
    <location>
        <begin position="235"/>
        <end position="269"/>
    </location>
</feature>
<feature type="active site" description="Schiff-base intermediate with DNA" evidence="2">
    <location>
        <position position="2"/>
    </location>
</feature>
<feature type="active site" description="Proton donor" evidence="2">
    <location>
        <position position="3"/>
    </location>
</feature>
<feature type="active site" description="Proton donor; for beta-elimination activity" evidence="2">
    <location>
        <position position="57"/>
    </location>
</feature>
<feature type="active site" description="Proton donor; for delta-elimination activity" evidence="2">
    <location>
        <position position="259"/>
    </location>
</feature>
<feature type="binding site" evidence="2">
    <location>
        <position position="90"/>
    </location>
    <ligand>
        <name>DNA</name>
        <dbReference type="ChEBI" id="CHEBI:16991"/>
    </ligand>
</feature>
<feature type="binding site" evidence="2">
    <location>
        <position position="109"/>
    </location>
    <ligand>
        <name>DNA</name>
        <dbReference type="ChEBI" id="CHEBI:16991"/>
    </ligand>
</feature>
<feature type="binding site" evidence="2">
    <location>
        <position position="150"/>
    </location>
    <ligand>
        <name>DNA</name>
        <dbReference type="ChEBI" id="CHEBI:16991"/>
    </ligand>
</feature>
<evidence type="ECO:0000250" key="1"/>
<evidence type="ECO:0000255" key="2">
    <source>
        <dbReference type="HAMAP-Rule" id="MF_00103"/>
    </source>
</evidence>
<keyword id="KW-0227">DNA damage</keyword>
<keyword id="KW-0234">DNA repair</keyword>
<keyword id="KW-0238">DNA-binding</keyword>
<keyword id="KW-0326">Glycosidase</keyword>
<keyword id="KW-0378">Hydrolase</keyword>
<keyword id="KW-0456">Lyase</keyword>
<keyword id="KW-0479">Metal-binding</keyword>
<keyword id="KW-0511">Multifunctional enzyme</keyword>
<keyword id="KW-1185">Reference proteome</keyword>
<keyword id="KW-0862">Zinc</keyword>
<keyword id="KW-0863">Zinc-finger</keyword>
<proteinExistence type="inferred from homology"/>
<organism>
    <name type="scientific">Photorhabdus laumondii subsp. laumondii (strain DSM 15139 / CIP 105565 / TT01)</name>
    <name type="common">Photorhabdus luminescens subsp. laumondii</name>
    <dbReference type="NCBI Taxonomy" id="243265"/>
    <lineage>
        <taxon>Bacteria</taxon>
        <taxon>Pseudomonadati</taxon>
        <taxon>Pseudomonadota</taxon>
        <taxon>Gammaproteobacteria</taxon>
        <taxon>Enterobacterales</taxon>
        <taxon>Morganellaceae</taxon>
        <taxon>Photorhabdus</taxon>
    </lineage>
</organism>
<reference key="1">
    <citation type="journal article" date="2003" name="Nat. Biotechnol.">
        <title>The genome sequence of the entomopathogenic bacterium Photorhabdus luminescens.</title>
        <authorList>
            <person name="Duchaud E."/>
            <person name="Rusniok C."/>
            <person name="Frangeul L."/>
            <person name="Buchrieser C."/>
            <person name="Givaudan A."/>
            <person name="Taourit S."/>
            <person name="Bocs S."/>
            <person name="Boursaux-Eude C."/>
            <person name="Chandler M."/>
            <person name="Charles J.-F."/>
            <person name="Dassa E."/>
            <person name="Derose R."/>
            <person name="Derzelle S."/>
            <person name="Freyssinet G."/>
            <person name="Gaudriault S."/>
            <person name="Medigue C."/>
            <person name="Lanois A."/>
            <person name="Powell K."/>
            <person name="Siguier P."/>
            <person name="Vincent R."/>
            <person name="Wingate V."/>
            <person name="Zouine M."/>
            <person name="Glaser P."/>
            <person name="Boemare N."/>
            <person name="Danchin A."/>
            <person name="Kunst F."/>
        </authorList>
    </citation>
    <scope>NUCLEOTIDE SEQUENCE [LARGE SCALE GENOMIC DNA]</scope>
    <source>
        <strain>DSM 15139 / CIP 105565 / TT01</strain>
    </source>
</reference>
<gene>
    <name evidence="2" type="primary">mutM</name>
    <name evidence="2" type="synonym">fpg</name>
    <name type="ordered locus">plu4857</name>
</gene>
<comment type="function">
    <text evidence="2">Involved in base excision repair of DNA damaged by oxidation or by mutagenic agents. Acts as a DNA glycosylase that recognizes and removes damaged bases. Has a preference for oxidized purines, such as 7,8-dihydro-8-oxoguanine (8-oxoG). Has AP (apurinic/apyrimidinic) lyase activity and introduces nicks in the DNA strand. Cleaves the DNA backbone by beta-delta elimination to generate a single-strand break at the site of the removed base with both 3'- and 5'-phosphates.</text>
</comment>
<comment type="catalytic activity">
    <reaction evidence="2">
        <text>Hydrolysis of DNA containing ring-opened 7-methylguanine residues, releasing 2,6-diamino-4-hydroxy-5-(N-methyl)formamidopyrimidine.</text>
        <dbReference type="EC" id="3.2.2.23"/>
    </reaction>
</comment>
<comment type="catalytic activity">
    <reaction evidence="2">
        <text>2'-deoxyribonucleotide-(2'-deoxyribose 5'-phosphate)-2'-deoxyribonucleotide-DNA = a 3'-end 2'-deoxyribonucleotide-(2,3-dehydro-2,3-deoxyribose 5'-phosphate)-DNA + a 5'-end 5'-phospho-2'-deoxyribonucleoside-DNA + H(+)</text>
        <dbReference type="Rhea" id="RHEA:66592"/>
        <dbReference type="Rhea" id="RHEA-COMP:13180"/>
        <dbReference type="Rhea" id="RHEA-COMP:16897"/>
        <dbReference type="Rhea" id="RHEA-COMP:17067"/>
        <dbReference type="ChEBI" id="CHEBI:15378"/>
        <dbReference type="ChEBI" id="CHEBI:136412"/>
        <dbReference type="ChEBI" id="CHEBI:157695"/>
        <dbReference type="ChEBI" id="CHEBI:167181"/>
        <dbReference type="EC" id="4.2.99.18"/>
    </reaction>
</comment>
<comment type="cofactor">
    <cofactor evidence="2">
        <name>Zn(2+)</name>
        <dbReference type="ChEBI" id="CHEBI:29105"/>
    </cofactor>
    <text evidence="2">Binds 1 zinc ion per subunit.</text>
</comment>
<comment type="subunit">
    <text evidence="2">Monomer.</text>
</comment>
<comment type="similarity">
    <text evidence="2">Belongs to the FPG family.</text>
</comment>